<name>CANB_CRYNB</name>
<sequence>MGAAESSMFNSLEKNSNFSGPELMRLKKRFMKLDKDGSGSIDKDEFLQIPQIANNPLAHRMIAIFDEDGSGTVDFQEFVGGLSAFSSKGGRDEKLRFAFKVYDMDRDGYISNGELYLVLKQMVGNNLKDQQLQQIVDKTIMEADKDGDGKLSFEEFTQMVASTDIVKQMTLEDLF</sequence>
<gene>
    <name type="primary">CNB1</name>
    <name type="ordered locus">CNBD5950</name>
</gene>
<evidence type="ECO:0000250" key="1"/>
<evidence type="ECO:0000255" key="2">
    <source>
        <dbReference type="PROSITE-ProRule" id="PRU00448"/>
    </source>
</evidence>
<evidence type="ECO:0000305" key="3"/>
<organism>
    <name type="scientific">Cryptococcus neoformans var. neoformans serotype D (strain B-3501A)</name>
    <name type="common">Filobasidiella neoformans</name>
    <dbReference type="NCBI Taxonomy" id="283643"/>
    <lineage>
        <taxon>Eukaryota</taxon>
        <taxon>Fungi</taxon>
        <taxon>Dikarya</taxon>
        <taxon>Basidiomycota</taxon>
        <taxon>Agaricomycotina</taxon>
        <taxon>Tremellomycetes</taxon>
        <taxon>Tremellales</taxon>
        <taxon>Cryptococcaceae</taxon>
        <taxon>Cryptococcus</taxon>
        <taxon>Cryptococcus neoformans species complex</taxon>
    </lineage>
</organism>
<feature type="chain" id="PRO_0000410029" description="Calcineurin subunit B">
    <location>
        <begin position="1"/>
        <end position="175"/>
    </location>
</feature>
<feature type="domain" description="EF-hand 1" evidence="2">
    <location>
        <begin position="21"/>
        <end position="56"/>
    </location>
</feature>
<feature type="domain" description="EF-hand 2" evidence="2">
    <location>
        <begin position="60"/>
        <end position="88"/>
    </location>
</feature>
<feature type="domain" description="EF-hand 3" evidence="2">
    <location>
        <begin position="90"/>
        <end position="125"/>
    </location>
</feature>
<feature type="domain" description="EF-hand 4" evidence="2">
    <location>
        <begin position="131"/>
        <end position="166"/>
    </location>
</feature>
<feature type="binding site" evidence="2">
    <location>
        <position position="34"/>
    </location>
    <ligand>
        <name>Ca(2+)</name>
        <dbReference type="ChEBI" id="CHEBI:29108"/>
        <label>1</label>
    </ligand>
</feature>
<feature type="binding site" evidence="2">
    <location>
        <position position="36"/>
    </location>
    <ligand>
        <name>Ca(2+)</name>
        <dbReference type="ChEBI" id="CHEBI:29108"/>
        <label>1</label>
    </ligand>
</feature>
<feature type="binding site" evidence="2">
    <location>
        <position position="38"/>
    </location>
    <ligand>
        <name>Ca(2+)</name>
        <dbReference type="ChEBI" id="CHEBI:29108"/>
        <label>1</label>
    </ligand>
</feature>
<feature type="binding site" evidence="2">
    <location>
        <position position="40"/>
    </location>
    <ligand>
        <name>Ca(2+)</name>
        <dbReference type="ChEBI" id="CHEBI:29108"/>
        <label>1</label>
    </ligand>
</feature>
<feature type="binding site" evidence="2">
    <location>
        <position position="45"/>
    </location>
    <ligand>
        <name>Ca(2+)</name>
        <dbReference type="ChEBI" id="CHEBI:29108"/>
        <label>1</label>
    </ligand>
</feature>
<feature type="binding site" evidence="2">
    <location>
        <position position="66"/>
    </location>
    <ligand>
        <name>Ca(2+)</name>
        <dbReference type="ChEBI" id="CHEBI:29108"/>
        <label>2</label>
    </ligand>
</feature>
<feature type="binding site" evidence="2">
    <location>
        <position position="68"/>
    </location>
    <ligand>
        <name>Ca(2+)</name>
        <dbReference type="ChEBI" id="CHEBI:29108"/>
        <label>2</label>
    </ligand>
</feature>
<feature type="binding site" evidence="2">
    <location>
        <position position="70"/>
    </location>
    <ligand>
        <name>Ca(2+)</name>
        <dbReference type="ChEBI" id="CHEBI:29108"/>
        <label>2</label>
    </ligand>
</feature>
<feature type="binding site" evidence="2">
    <location>
        <position position="72"/>
    </location>
    <ligand>
        <name>Ca(2+)</name>
        <dbReference type="ChEBI" id="CHEBI:29108"/>
        <label>2</label>
    </ligand>
</feature>
<feature type="binding site" evidence="2">
    <location>
        <position position="77"/>
    </location>
    <ligand>
        <name>Ca(2+)</name>
        <dbReference type="ChEBI" id="CHEBI:29108"/>
        <label>2</label>
    </ligand>
</feature>
<feature type="binding site" evidence="2">
    <location>
        <position position="103"/>
    </location>
    <ligand>
        <name>Ca(2+)</name>
        <dbReference type="ChEBI" id="CHEBI:29108"/>
        <label>3</label>
    </ligand>
</feature>
<feature type="binding site" evidence="2">
    <location>
        <position position="105"/>
    </location>
    <ligand>
        <name>Ca(2+)</name>
        <dbReference type="ChEBI" id="CHEBI:29108"/>
        <label>3</label>
    </ligand>
</feature>
<feature type="binding site" evidence="2">
    <location>
        <position position="107"/>
    </location>
    <ligand>
        <name>Ca(2+)</name>
        <dbReference type="ChEBI" id="CHEBI:29108"/>
        <label>3</label>
    </ligand>
</feature>
<feature type="binding site" evidence="2">
    <location>
        <position position="109"/>
    </location>
    <ligand>
        <name>Ca(2+)</name>
        <dbReference type="ChEBI" id="CHEBI:29108"/>
        <label>3</label>
    </ligand>
</feature>
<feature type="binding site" evidence="2">
    <location>
        <position position="114"/>
    </location>
    <ligand>
        <name>Ca(2+)</name>
        <dbReference type="ChEBI" id="CHEBI:29108"/>
        <label>3</label>
    </ligand>
</feature>
<feature type="binding site" evidence="2">
    <location>
        <position position="144"/>
    </location>
    <ligand>
        <name>Ca(2+)</name>
        <dbReference type="ChEBI" id="CHEBI:29108"/>
        <label>4</label>
    </ligand>
</feature>
<feature type="binding site" evidence="2">
    <location>
        <position position="146"/>
    </location>
    <ligand>
        <name>Ca(2+)</name>
        <dbReference type="ChEBI" id="CHEBI:29108"/>
        <label>4</label>
    </ligand>
</feature>
<feature type="binding site" evidence="2">
    <location>
        <position position="148"/>
    </location>
    <ligand>
        <name>Ca(2+)</name>
        <dbReference type="ChEBI" id="CHEBI:29108"/>
        <label>4</label>
    </ligand>
</feature>
<feature type="binding site" evidence="2">
    <location>
        <position position="150"/>
    </location>
    <ligand>
        <name>Ca(2+)</name>
        <dbReference type="ChEBI" id="CHEBI:29108"/>
        <label>4</label>
    </ligand>
</feature>
<feature type="binding site" evidence="2">
    <location>
        <position position="155"/>
    </location>
    <ligand>
        <name>Ca(2+)</name>
        <dbReference type="ChEBI" id="CHEBI:29108"/>
        <label>4</label>
    </ligand>
</feature>
<comment type="function">
    <text evidence="1">Regulatory subunit of calcineurin, a calcium-dependent, calmodulin stimulated protein phosphatase. Confers calcium sensitivity. Plays a central role in virulence and antifungal drug action (By similarity).</text>
</comment>
<comment type="subunit">
    <text evidence="1">Composed of a catalytic subunit (A) and a regulatory subunit (B).</text>
</comment>
<comment type="miscellaneous">
    <text evidence="1">This protein has four functional calcium-binding sites.</text>
</comment>
<comment type="similarity">
    <text evidence="3">Belongs to the calcineurin regulatory subunit family.</text>
</comment>
<dbReference type="EMBL" id="AAEY01000022">
    <property type="protein sequence ID" value="EAL20994.1"/>
    <property type="molecule type" value="Genomic_DNA"/>
</dbReference>
<dbReference type="RefSeq" id="XP_775641.1">
    <property type="nucleotide sequence ID" value="XM_770548.1"/>
</dbReference>
<dbReference type="SMR" id="P0CM55"/>
<dbReference type="EnsemblFungi" id="AAW43026">
    <property type="protein sequence ID" value="AAW43026"/>
    <property type="gene ID" value="CND00260"/>
</dbReference>
<dbReference type="GeneID" id="4935984"/>
<dbReference type="KEGG" id="cnb:CNBD5950"/>
<dbReference type="VEuPathDB" id="FungiDB:CNBD5950"/>
<dbReference type="HOGENOM" id="CLU_061288_10_1_1"/>
<dbReference type="GO" id="GO:0005955">
    <property type="term" value="C:calcineurin complex"/>
    <property type="evidence" value="ECO:0007669"/>
    <property type="project" value="EnsemblFungi"/>
</dbReference>
<dbReference type="GO" id="GO:0005509">
    <property type="term" value="F:calcium ion binding"/>
    <property type="evidence" value="ECO:0007669"/>
    <property type="project" value="EnsemblFungi"/>
</dbReference>
<dbReference type="GO" id="GO:0004723">
    <property type="term" value="F:calcium-dependent protein serine/threonine phosphatase activity"/>
    <property type="evidence" value="ECO:0007669"/>
    <property type="project" value="EnsemblFungi"/>
</dbReference>
<dbReference type="GO" id="GO:0071444">
    <property type="term" value="P:cellular response to pheromone"/>
    <property type="evidence" value="ECO:0007669"/>
    <property type="project" value="EnsemblFungi"/>
</dbReference>
<dbReference type="GO" id="GO:0000747">
    <property type="term" value="P:conjugation with cellular fusion"/>
    <property type="evidence" value="ECO:0007669"/>
    <property type="project" value="EnsemblFungi"/>
</dbReference>
<dbReference type="GO" id="GO:0006873">
    <property type="term" value="P:intracellular monoatomic ion homeostasis"/>
    <property type="evidence" value="ECO:0007669"/>
    <property type="project" value="EnsemblFungi"/>
</dbReference>
<dbReference type="CDD" id="cd00051">
    <property type="entry name" value="EFh"/>
    <property type="match status" value="1"/>
</dbReference>
<dbReference type="FunFam" id="1.10.238.10:FF:000047">
    <property type="entry name" value="Calcineurin subunit B type 1"/>
    <property type="match status" value="1"/>
</dbReference>
<dbReference type="Gene3D" id="1.10.238.10">
    <property type="entry name" value="EF-hand"/>
    <property type="match status" value="1"/>
</dbReference>
<dbReference type="InterPro" id="IPR011992">
    <property type="entry name" value="EF-hand-dom_pair"/>
</dbReference>
<dbReference type="InterPro" id="IPR018247">
    <property type="entry name" value="EF_Hand_1_Ca_BS"/>
</dbReference>
<dbReference type="InterPro" id="IPR002048">
    <property type="entry name" value="EF_hand_dom"/>
</dbReference>
<dbReference type="PANTHER" id="PTHR45942">
    <property type="entry name" value="PROTEIN PHOSPATASE 3 REGULATORY SUBUNIT B ALPHA ISOFORM TYPE 1"/>
    <property type="match status" value="1"/>
</dbReference>
<dbReference type="Pfam" id="PF13499">
    <property type="entry name" value="EF-hand_7"/>
    <property type="match status" value="2"/>
</dbReference>
<dbReference type="PRINTS" id="PR01697">
    <property type="entry name" value="PARVALBUMIN"/>
</dbReference>
<dbReference type="SMART" id="SM00054">
    <property type="entry name" value="EFh"/>
    <property type="match status" value="4"/>
</dbReference>
<dbReference type="SUPFAM" id="SSF47473">
    <property type="entry name" value="EF-hand"/>
    <property type="match status" value="1"/>
</dbReference>
<dbReference type="PROSITE" id="PS00018">
    <property type="entry name" value="EF_HAND_1"/>
    <property type="match status" value="4"/>
</dbReference>
<dbReference type="PROSITE" id="PS50222">
    <property type="entry name" value="EF_HAND_2"/>
    <property type="match status" value="4"/>
</dbReference>
<keyword id="KW-0106">Calcium</keyword>
<keyword id="KW-0479">Metal-binding</keyword>
<keyword id="KW-0677">Repeat</keyword>
<keyword id="KW-0843">Virulence</keyword>
<accession>P0CM55</accession>
<accession>Q55T57</accession>
<accession>Q5KJ85</accession>
<accession>Q9HDD3</accession>
<accession>Q9HDE1</accession>
<proteinExistence type="inferred from homology"/>
<protein>
    <recommendedName>
        <fullName>Calcineurin subunit B</fullName>
    </recommendedName>
    <alternativeName>
        <fullName>Calcineurin regulatory subunit</fullName>
    </alternativeName>
    <alternativeName>
        <fullName>Protein phosphatase 2B regulatory subunit</fullName>
    </alternativeName>
</protein>
<reference key="1">
    <citation type="journal article" date="2005" name="Science">
        <title>The genome of the basidiomycetous yeast and human pathogen Cryptococcus neoformans.</title>
        <authorList>
            <person name="Loftus B.J."/>
            <person name="Fung E."/>
            <person name="Roncaglia P."/>
            <person name="Rowley D."/>
            <person name="Amedeo P."/>
            <person name="Bruno D."/>
            <person name="Vamathevan J."/>
            <person name="Miranda M."/>
            <person name="Anderson I.J."/>
            <person name="Fraser J.A."/>
            <person name="Allen J.E."/>
            <person name="Bosdet I.E."/>
            <person name="Brent M.R."/>
            <person name="Chiu R."/>
            <person name="Doering T.L."/>
            <person name="Donlin M.J."/>
            <person name="D'Souza C.A."/>
            <person name="Fox D.S."/>
            <person name="Grinberg V."/>
            <person name="Fu J."/>
            <person name="Fukushima M."/>
            <person name="Haas B.J."/>
            <person name="Huang J.C."/>
            <person name="Janbon G."/>
            <person name="Jones S.J.M."/>
            <person name="Koo H.L."/>
            <person name="Krzywinski M.I."/>
            <person name="Kwon-Chung K.J."/>
            <person name="Lengeler K.B."/>
            <person name="Maiti R."/>
            <person name="Marra M.A."/>
            <person name="Marra R.E."/>
            <person name="Mathewson C.A."/>
            <person name="Mitchell T.G."/>
            <person name="Pertea M."/>
            <person name="Riggs F.R."/>
            <person name="Salzberg S.L."/>
            <person name="Schein J.E."/>
            <person name="Shvartsbeyn A."/>
            <person name="Shin H."/>
            <person name="Shumway M."/>
            <person name="Specht C.A."/>
            <person name="Suh B.B."/>
            <person name="Tenney A."/>
            <person name="Utterback T.R."/>
            <person name="Wickes B.L."/>
            <person name="Wortman J.R."/>
            <person name="Wye N.H."/>
            <person name="Kronstad J.W."/>
            <person name="Lodge J.K."/>
            <person name="Heitman J."/>
            <person name="Davis R.W."/>
            <person name="Fraser C.M."/>
            <person name="Hyman R.W."/>
        </authorList>
    </citation>
    <scope>NUCLEOTIDE SEQUENCE [LARGE SCALE GENOMIC DNA]</scope>
    <source>
        <strain>B-3501A</strain>
    </source>
</reference>